<feature type="chain" id="PRO_1000131494" description="Phosphatidylserine decarboxylase beta chain" evidence="1">
    <location>
        <begin position="1"/>
        <end position="189"/>
    </location>
</feature>
<feature type="chain" id="PRO_1000131495" description="Phosphatidylserine decarboxylase alpha chain" evidence="1">
    <location>
        <begin position="190"/>
        <end position="233"/>
    </location>
</feature>
<feature type="active site" description="Schiff-base intermediate with substrate; via pyruvic acid" evidence="1">
    <location>
        <position position="190"/>
    </location>
</feature>
<feature type="site" description="Cleavage (non-hydrolytic); by autocatalysis" evidence="1">
    <location>
        <begin position="189"/>
        <end position="190"/>
    </location>
</feature>
<feature type="modified residue" description="Pyruvic acid (Ser); by autocatalysis" evidence="1">
    <location>
        <position position="190"/>
    </location>
</feature>
<comment type="function">
    <text evidence="1">Catalyzes the formation of phosphatidylethanolamine (PtdEtn) from phosphatidylserine (PtdSer).</text>
</comment>
<comment type="catalytic activity">
    <reaction evidence="1">
        <text>a 1,2-diacyl-sn-glycero-3-phospho-L-serine + H(+) = a 1,2-diacyl-sn-glycero-3-phosphoethanolamine + CO2</text>
        <dbReference type="Rhea" id="RHEA:20828"/>
        <dbReference type="ChEBI" id="CHEBI:15378"/>
        <dbReference type="ChEBI" id="CHEBI:16526"/>
        <dbReference type="ChEBI" id="CHEBI:57262"/>
        <dbReference type="ChEBI" id="CHEBI:64612"/>
        <dbReference type="EC" id="4.1.1.65"/>
    </reaction>
</comment>
<comment type="cofactor">
    <cofactor evidence="1">
        <name>pyruvate</name>
        <dbReference type="ChEBI" id="CHEBI:15361"/>
    </cofactor>
    <text evidence="1">Binds 1 pyruvoyl group covalently per subunit.</text>
</comment>
<comment type="pathway">
    <text evidence="1">Phospholipid metabolism; phosphatidylethanolamine biosynthesis; phosphatidylethanolamine from CDP-diacylglycerol: step 2/2.</text>
</comment>
<comment type="subunit">
    <text evidence="1">Heterodimer of a large membrane-associated beta subunit and a small pyruvoyl-containing alpha subunit.</text>
</comment>
<comment type="subcellular location">
    <subcellularLocation>
        <location evidence="1">Cell membrane</location>
        <topology evidence="1">Peripheral membrane protein</topology>
    </subcellularLocation>
</comment>
<comment type="PTM">
    <text evidence="1">Is synthesized initially as an inactive proenzyme. Formation of the active enzyme involves a self-maturation process in which the active site pyruvoyl group is generated from an internal serine residue via an autocatalytic post-translational modification. Two non-identical subunits are generated from the proenzyme in this reaction, and the pyruvate is formed at the N-terminus of the alpha chain, which is derived from the carboxyl end of the proenzyme. The post-translation cleavage follows an unusual pathway, termed non-hydrolytic serinolysis, in which the side chain hydroxyl group of the serine supplies its oxygen atom to form the C-terminus of the beta chain, while the remainder of the serine residue undergoes an oxidative deamination to produce ammonia and the pyruvoyl prosthetic group on the alpha chain.</text>
</comment>
<comment type="similarity">
    <text evidence="1">Belongs to the phosphatidylserine decarboxylase family. PSD-A subfamily.</text>
</comment>
<gene>
    <name evidence="1" type="primary">psd</name>
    <name type="ordered locus">Xaut_4662</name>
</gene>
<organism>
    <name type="scientific">Xanthobacter autotrophicus (strain ATCC BAA-1158 / Py2)</name>
    <dbReference type="NCBI Taxonomy" id="78245"/>
    <lineage>
        <taxon>Bacteria</taxon>
        <taxon>Pseudomonadati</taxon>
        <taxon>Pseudomonadota</taxon>
        <taxon>Alphaproteobacteria</taxon>
        <taxon>Hyphomicrobiales</taxon>
        <taxon>Xanthobacteraceae</taxon>
        <taxon>Xanthobacter</taxon>
    </lineage>
</organism>
<keyword id="KW-1003">Cell membrane</keyword>
<keyword id="KW-0210">Decarboxylase</keyword>
<keyword id="KW-0444">Lipid biosynthesis</keyword>
<keyword id="KW-0443">Lipid metabolism</keyword>
<keyword id="KW-0456">Lyase</keyword>
<keyword id="KW-0472">Membrane</keyword>
<keyword id="KW-0594">Phospholipid biosynthesis</keyword>
<keyword id="KW-1208">Phospholipid metabolism</keyword>
<keyword id="KW-0670">Pyruvate</keyword>
<keyword id="KW-1185">Reference proteome</keyword>
<keyword id="KW-0865">Zymogen</keyword>
<protein>
    <recommendedName>
        <fullName evidence="1">Phosphatidylserine decarboxylase proenzyme</fullName>
        <ecNumber evidence="1">4.1.1.65</ecNumber>
    </recommendedName>
    <component>
        <recommendedName>
            <fullName evidence="1">Phosphatidylserine decarboxylase alpha chain</fullName>
        </recommendedName>
    </component>
    <component>
        <recommendedName>
            <fullName evidence="1">Phosphatidylserine decarboxylase beta chain</fullName>
        </recommendedName>
    </component>
</protein>
<sequence>MSVVTSIRKSLVPIHREGYPFIAIAVVIALGLMVFSTFLGMIGVGLAIWTALFFRDPPRVTPVRDGLVVAPADGRISQVGLARPPRELDLSDEPLLRVSIFMNVFNVHVNRAPVTGRIERLAYKPGLFLNADLDKASEDNERNGLVISTPLCRVGVVQIAGLIARRIVSFVREGESIGVGERFGLIRFGSRVDVYLPVGTRVLVSEGQLTVAGETVLCDLSAQQPRETAYRVS</sequence>
<accession>A7IPD6</accession>
<evidence type="ECO:0000255" key="1">
    <source>
        <dbReference type="HAMAP-Rule" id="MF_00664"/>
    </source>
</evidence>
<reference key="1">
    <citation type="submission" date="2007-07" db="EMBL/GenBank/DDBJ databases">
        <title>Complete sequence of chromosome of Xanthobacter autotrophicus Py2.</title>
        <authorList>
            <consortium name="US DOE Joint Genome Institute"/>
            <person name="Copeland A."/>
            <person name="Lucas S."/>
            <person name="Lapidus A."/>
            <person name="Barry K."/>
            <person name="Glavina del Rio T."/>
            <person name="Hammon N."/>
            <person name="Israni S."/>
            <person name="Dalin E."/>
            <person name="Tice H."/>
            <person name="Pitluck S."/>
            <person name="Sims D."/>
            <person name="Brettin T."/>
            <person name="Bruce D."/>
            <person name="Detter J.C."/>
            <person name="Han C."/>
            <person name="Tapia R."/>
            <person name="Brainard J."/>
            <person name="Schmutz J."/>
            <person name="Larimer F."/>
            <person name="Land M."/>
            <person name="Hauser L."/>
            <person name="Kyrpides N."/>
            <person name="Kim E."/>
            <person name="Ensigns S.A."/>
            <person name="Richardson P."/>
        </authorList>
    </citation>
    <scope>NUCLEOTIDE SEQUENCE [LARGE SCALE GENOMIC DNA]</scope>
    <source>
        <strain>ATCC BAA-1158 / Py2</strain>
    </source>
</reference>
<proteinExistence type="inferred from homology"/>
<name>PSD_XANP2</name>
<dbReference type="EC" id="4.1.1.65" evidence="1"/>
<dbReference type="EMBL" id="CP000781">
    <property type="protein sequence ID" value="ABS69882.1"/>
    <property type="molecule type" value="Genomic_DNA"/>
</dbReference>
<dbReference type="STRING" id="78245.Xaut_4662"/>
<dbReference type="KEGG" id="xau:Xaut_4662"/>
<dbReference type="eggNOG" id="COG0688">
    <property type="taxonomic scope" value="Bacteria"/>
</dbReference>
<dbReference type="HOGENOM" id="CLU_072492_0_0_5"/>
<dbReference type="OrthoDB" id="9790893at2"/>
<dbReference type="PhylomeDB" id="A7IPD6"/>
<dbReference type="UniPathway" id="UPA00558">
    <property type="reaction ID" value="UER00616"/>
</dbReference>
<dbReference type="Proteomes" id="UP000002417">
    <property type="component" value="Chromosome"/>
</dbReference>
<dbReference type="GO" id="GO:0005886">
    <property type="term" value="C:plasma membrane"/>
    <property type="evidence" value="ECO:0007669"/>
    <property type="project" value="UniProtKB-SubCell"/>
</dbReference>
<dbReference type="GO" id="GO:0004609">
    <property type="term" value="F:phosphatidylserine decarboxylase activity"/>
    <property type="evidence" value="ECO:0007669"/>
    <property type="project" value="UniProtKB-UniRule"/>
</dbReference>
<dbReference type="GO" id="GO:0006646">
    <property type="term" value="P:phosphatidylethanolamine biosynthetic process"/>
    <property type="evidence" value="ECO:0007669"/>
    <property type="project" value="UniProtKB-UniRule"/>
</dbReference>
<dbReference type="HAMAP" id="MF_00664">
    <property type="entry name" value="PS_decarb_PSD_A"/>
    <property type="match status" value="1"/>
</dbReference>
<dbReference type="InterPro" id="IPR003817">
    <property type="entry name" value="PS_Dcarbxylase"/>
</dbReference>
<dbReference type="InterPro" id="IPR033175">
    <property type="entry name" value="PSD-A"/>
</dbReference>
<dbReference type="NCBIfam" id="NF003677">
    <property type="entry name" value="PRK05305.1-1"/>
    <property type="match status" value="1"/>
</dbReference>
<dbReference type="NCBIfam" id="NF003678">
    <property type="entry name" value="PRK05305.1-2"/>
    <property type="match status" value="1"/>
</dbReference>
<dbReference type="NCBIfam" id="NF003679">
    <property type="entry name" value="PRK05305.1-3"/>
    <property type="match status" value="1"/>
</dbReference>
<dbReference type="NCBIfam" id="NF003685">
    <property type="entry name" value="PRK05305.2-5"/>
    <property type="match status" value="1"/>
</dbReference>
<dbReference type="PANTHER" id="PTHR35809">
    <property type="entry name" value="ARCHAETIDYLSERINE DECARBOXYLASE PROENZYME-RELATED"/>
    <property type="match status" value="1"/>
</dbReference>
<dbReference type="PANTHER" id="PTHR35809:SF1">
    <property type="entry name" value="ARCHAETIDYLSERINE DECARBOXYLASE PROENZYME-RELATED"/>
    <property type="match status" value="1"/>
</dbReference>
<dbReference type="Pfam" id="PF02666">
    <property type="entry name" value="PS_Dcarbxylase"/>
    <property type="match status" value="1"/>
</dbReference>